<sequence length="1071" mass="124333">MKLIYTEMSYSMTEILVNEARKAADQGYRVFYIAPNSLSFEKEREVLTLLPERGTFSIIVTRFVQMSRYFTVESSPSKQHLDDTTLAMIFYRALMQLKPEDLPSYGRLQNNSVFIEQLVELYKELKNAQLSVHDLTGLDHPQKQEDLIKIIELAETIMIQQDYNQDSPLQSFARAIKLGLLNNQLSKTVVVIDGFSRFSAEEDYLLSLLNNNCQEVIIGSYVSQKAYQKSFIKGNIYEASLHFLQDLAQKYHIKPVFATSNQVFKPAFSRLTQLFEATHDFSQVDWQLQKNDLDHFSLWQCHHQKEEIEHVAKSIRQKLYEGYRYKDILVLLGDMDAYQLQIGPIFDKFEIPYYLGKAEPMAAHPLVQFIESLERSQRYNWRREDILNMLKSGLFGCFDDSDIDRFEEYTQFADIKGFTKFSKPFTINSSRQYPLDFLNEMRQDIVLPLQELFKSQKQLGASLVDKLILFLKKIRLAENMQGLAQSQLEVEKNEEVWKRFTDILTSFHHIFGQEKLRLSDCLALIKTGMKSAQYRVVPATLDVVTIKSYDLVQPHSKPFVYAIGLTQSHFPKQIHHSGLLSDQERARINEIRNYRHFDIASAENSKKNHQTALSLFNAATKELVLSVPTVINETFDDLSPYLKELINFGLPLLDKGKNYLSYDNSDIGNYKALLSQIIAINRQDLIEMSDQDKMFWTVVLRYLRKQLRKQQLELPTSDYRLSTKSLSKEVIEVCFPKRIPLKLSATALTVFYNNQYNYFLKYVLNLNKTESIHPDSRIHGQYLHRVFERLMKDHTQEPFDNKLKQAIYHTNQESFFQQIYQDNAEAEYSLAILEDIVRSTAPILQLNQNIQVIDQEKNFHLDMGNEILVHGIIDRIDQLSDGSLGIVDYKSSANQFDIGTFYNGLSPQLVTYLAALKQITPHDINQLFGAMYLHLQDPKLDLVTFKQIDNTLVESIYKALTYKGIFSEVEKEHLSTGAYQTKNALYSNDELETLLNYNRYLYLKAAKHIKKGHFLINPYTSDGKTVQGDQLKAITRFEADLDMGQARRLVTLPAKEKKECFLTLMRKESHL</sequence>
<name>ADDB_STRP3</name>
<keyword id="KW-0067">ATP-binding</keyword>
<keyword id="KW-0227">DNA damage</keyword>
<keyword id="KW-0234">DNA repair</keyword>
<keyword id="KW-0238">DNA-binding</keyword>
<keyword id="KW-0269">Exonuclease</keyword>
<keyword id="KW-0347">Helicase</keyword>
<keyword id="KW-0378">Hydrolase</keyword>
<keyword id="KW-0540">Nuclease</keyword>
<keyword id="KW-0547">Nucleotide-binding</keyword>
<dbReference type="EC" id="3.1.-.-" evidence="1"/>
<dbReference type="EMBL" id="AE014074">
    <property type="protein sequence ID" value="AAM79120.1"/>
    <property type="molecule type" value="Genomic_DNA"/>
</dbReference>
<dbReference type="RefSeq" id="WP_011054337.1">
    <property type="nucleotide sequence ID" value="NC_004070.1"/>
</dbReference>
<dbReference type="SMR" id="P0CZ54"/>
<dbReference type="KEGG" id="spg:SpyM3_0513"/>
<dbReference type="HOGENOM" id="CLU_007838_1_0_9"/>
<dbReference type="Proteomes" id="UP000000564">
    <property type="component" value="Chromosome"/>
</dbReference>
<dbReference type="GO" id="GO:0008409">
    <property type="term" value="F:5'-3' exonuclease activity"/>
    <property type="evidence" value="ECO:0007669"/>
    <property type="project" value="UniProtKB-UniRule"/>
</dbReference>
<dbReference type="GO" id="GO:0005524">
    <property type="term" value="F:ATP binding"/>
    <property type="evidence" value="ECO:0007669"/>
    <property type="project" value="UniProtKB-UniRule"/>
</dbReference>
<dbReference type="GO" id="GO:0003690">
    <property type="term" value="F:double-stranded DNA binding"/>
    <property type="evidence" value="ECO:0007669"/>
    <property type="project" value="UniProtKB-UniRule"/>
</dbReference>
<dbReference type="GO" id="GO:0004386">
    <property type="term" value="F:helicase activity"/>
    <property type="evidence" value="ECO:0007669"/>
    <property type="project" value="UniProtKB-KW"/>
</dbReference>
<dbReference type="GO" id="GO:0016817">
    <property type="term" value="F:hydrolase activity, acting on acid anhydrides"/>
    <property type="evidence" value="ECO:0007669"/>
    <property type="project" value="InterPro"/>
</dbReference>
<dbReference type="GO" id="GO:0000724">
    <property type="term" value="P:double-strand break repair via homologous recombination"/>
    <property type="evidence" value="ECO:0007669"/>
    <property type="project" value="UniProtKB-UniRule"/>
</dbReference>
<dbReference type="Gene3D" id="3.90.320.10">
    <property type="match status" value="1"/>
</dbReference>
<dbReference type="Gene3D" id="3.40.50.300">
    <property type="entry name" value="P-loop containing nucleotide triphosphate hydrolases"/>
    <property type="match status" value="3"/>
</dbReference>
<dbReference type="HAMAP" id="MF_01453">
    <property type="entry name" value="AddB_type2"/>
    <property type="match status" value="1"/>
</dbReference>
<dbReference type="InterPro" id="IPR049035">
    <property type="entry name" value="ADDB_N"/>
</dbReference>
<dbReference type="InterPro" id="IPR014141">
    <property type="entry name" value="DNA_helicase_suRexB"/>
</dbReference>
<dbReference type="InterPro" id="IPR027417">
    <property type="entry name" value="P-loop_NTPase"/>
</dbReference>
<dbReference type="InterPro" id="IPR011604">
    <property type="entry name" value="PDDEXK-like_dom_sf"/>
</dbReference>
<dbReference type="InterPro" id="IPR038726">
    <property type="entry name" value="PDDEXK_AddAB-type"/>
</dbReference>
<dbReference type="InterPro" id="IPR011335">
    <property type="entry name" value="Restrct_endonuc-II-like"/>
</dbReference>
<dbReference type="NCBIfam" id="TIGR02774">
    <property type="entry name" value="rexB_recomb"/>
    <property type="match status" value="1"/>
</dbReference>
<dbReference type="PANTHER" id="PTHR30591">
    <property type="entry name" value="RECBCD ENZYME SUBUNIT RECC"/>
    <property type="match status" value="1"/>
</dbReference>
<dbReference type="PANTHER" id="PTHR30591:SF1">
    <property type="entry name" value="RECBCD ENZYME SUBUNIT RECC"/>
    <property type="match status" value="1"/>
</dbReference>
<dbReference type="Pfam" id="PF21445">
    <property type="entry name" value="ADDB_N"/>
    <property type="match status" value="1"/>
</dbReference>
<dbReference type="Pfam" id="PF12705">
    <property type="entry name" value="PDDEXK_1"/>
    <property type="match status" value="1"/>
</dbReference>
<dbReference type="SUPFAM" id="SSF52540">
    <property type="entry name" value="P-loop containing nucleoside triphosphate hydrolases"/>
    <property type="match status" value="1"/>
</dbReference>
<dbReference type="SUPFAM" id="SSF52980">
    <property type="entry name" value="Restriction endonuclease-like"/>
    <property type="match status" value="1"/>
</dbReference>
<evidence type="ECO:0000255" key="1">
    <source>
        <dbReference type="HAMAP-Rule" id="MF_01453"/>
    </source>
</evidence>
<gene>
    <name evidence="1" type="primary">rexB</name>
    <name type="ordered locus">SpyM3_0513</name>
</gene>
<accession>P0CZ54</accession>
<accession>Q79WR0</accession>
<accession>Q8K816</accession>
<proteinExistence type="inferred from homology"/>
<protein>
    <recommendedName>
        <fullName evidence="1">ATP-dependent helicase/deoxyribonuclease subunit B</fullName>
        <ecNumber evidence="1">3.1.-.-</ecNumber>
    </recommendedName>
    <alternativeName>
        <fullName evidence="1">ATP-dependent helicase/nuclease subunit RexB</fullName>
    </alternativeName>
</protein>
<organism>
    <name type="scientific">Streptococcus pyogenes serotype M3 (strain ATCC BAA-595 / MGAS315)</name>
    <dbReference type="NCBI Taxonomy" id="198466"/>
    <lineage>
        <taxon>Bacteria</taxon>
        <taxon>Bacillati</taxon>
        <taxon>Bacillota</taxon>
        <taxon>Bacilli</taxon>
        <taxon>Lactobacillales</taxon>
        <taxon>Streptococcaceae</taxon>
        <taxon>Streptococcus</taxon>
    </lineage>
</organism>
<feature type="chain" id="PRO_0000379407" description="ATP-dependent helicase/deoxyribonuclease subunit B">
    <location>
        <begin position="1"/>
        <end position="1071"/>
    </location>
</feature>
<reference key="1">
    <citation type="journal article" date="2002" name="Proc. Natl. Acad. Sci. U.S.A.">
        <title>Genome sequence of a serotype M3 strain of group A Streptococcus: phage-encoded toxins, the high-virulence phenotype, and clone emergence.</title>
        <authorList>
            <person name="Beres S.B."/>
            <person name="Sylva G.L."/>
            <person name="Barbian K.D."/>
            <person name="Lei B."/>
            <person name="Hoff J.S."/>
            <person name="Mammarella N.D."/>
            <person name="Liu M.-Y."/>
            <person name="Smoot J.C."/>
            <person name="Porcella S.F."/>
            <person name="Parkins L.D."/>
            <person name="Campbell D.S."/>
            <person name="Smith T.M."/>
            <person name="McCormick J.K."/>
            <person name="Leung D.Y.M."/>
            <person name="Schlievert P.M."/>
            <person name="Musser J.M."/>
        </authorList>
    </citation>
    <scope>NUCLEOTIDE SEQUENCE [LARGE SCALE GENOMIC DNA]</scope>
    <source>
        <strain>ATCC BAA-595 / MGAS315</strain>
    </source>
</reference>
<comment type="function">
    <text evidence="1">The heterodimer acts as both an ATP-dependent DNA helicase and an ATP-dependent, dual-direction single-stranded exonuclease. Recognizes the chi site generating a DNA molecule suitable for the initiation of homologous recombination. This subunit has 5' -&gt; 3' nuclease activity but not helicase activity.</text>
</comment>
<comment type="cofactor">
    <cofactor evidence="1">
        <name>Mg(2+)</name>
        <dbReference type="ChEBI" id="CHEBI:18420"/>
    </cofactor>
</comment>
<comment type="subunit">
    <text evidence="1">Heterodimer of AddA and RexB.</text>
</comment>
<comment type="miscellaneous">
    <text evidence="1">Despite having helicase-like domains, this subunit does not have helicase activity.</text>
</comment>
<comment type="similarity">
    <text evidence="1">Belongs to the helicase family. AddB/RexB type 2 subfamily.</text>
</comment>